<proteinExistence type="inferred from homology"/>
<protein>
    <recommendedName>
        <fullName evidence="1">Ferrochelatase</fullName>
        <ecNumber evidence="1">4.98.1.1</ecNumber>
    </recommendedName>
    <alternativeName>
        <fullName evidence="1">Heme synthase</fullName>
    </alternativeName>
    <alternativeName>
        <fullName evidence="1">Protoheme ferro-lyase</fullName>
    </alternativeName>
</protein>
<accession>A5WH56</accession>
<sequence>MKPNNPPRIAVLLVNLGTPDEPTAPAVRRYLKQFLSDPRVIEIPQFLWAIILNLFVLPTRPKRVAEAYASVWEGDSPIRKILNQQVDKLHARLEGSMGPFNISVHPAMSYGNPGLPDVMDKLCAEGVEHFVILPLFPQYSATSGGAVYDALTKWSLKQRNLPSYTIVKDYFAHPLYIKALADSIRRFQAVHGKPDKLMFSFHGIPQPYADKGDPYPKRCKCTAAQVAQELGLSQDEWIISFQSRFGKQEWVKPYTDVTLEQWGKAGVRSVQVVSPAFSADCLETLEELAMENRDNFINAGGQEYHYIPALNDDEAHIDLMEALAKPLVAGWASTLEGWT</sequence>
<feature type="chain" id="PRO_1000072026" description="Ferrochelatase">
    <location>
        <begin position="1"/>
        <end position="339"/>
    </location>
</feature>
<feature type="binding site" evidence="1">
    <location>
        <position position="202"/>
    </location>
    <ligand>
        <name>Fe cation</name>
        <dbReference type="ChEBI" id="CHEBI:24875"/>
    </ligand>
</feature>
<feature type="binding site" evidence="1">
    <location>
        <position position="283"/>
    </location>
    <ligand>
        <name>Fe cation</name>
        <dbReference type="ChEBI" id="CHEBI:24875"/>
    </ligand>
</feature>
<organism>
    <name type="scientific">Psychrobacter sp. (strain PRwf-1)</name>
    <dbReference type="NCBI Taxonomy" id="349106"/>
    <lineage>
        <taxon>Bacteria</taxon>
        <taxon>Pseudomonadati</taxon>
        <taxon>Pseudomonadota</taxon>
        <taxon>Gammaproteobacteria</taxon>
        <taxon>Moraxellales</taxon>
        <taxon>Moraxellaceae</taxon>
        <taxon>Psychrobacter</taxon>
    </lineage>
</organism>
<name>HEMH_PSYWF</name>
<keyword id="KW-0963">Cytoplasm</keyword>
<keyword id="KW-0350">Heme biosynthesis</keyword>
<keyword id="KW-0408">Iron</keyword>
<keyword id="KW-0456">Lyase</keyword>
<keyword id="KW-0479">Metal-binding</keyword>
<keyword id="KW-0627">Porphyrin biosynthesis</keyword>
<comment type="function">
    <text evidence="1">Catalyzes the ferrous insertion into protoporphyrin IX.</text>
</comment>
<comment type="catalytic activity">
    <reaction evidence="1">
        <text>heme b + 2 H(+) = protoporphyrin IX + Fe(2+)</text>
        <dbReference type="Rhea" id="RHEA:22584"/>
        <dbReference type="ChEBI" id="CHEBI:15378"/>
        <dbReference type="ChEBI" id="CHEBI:29033"/>
        <dbReference type="ChEBI" id="CHEBI:57306"/>
        <dbReference type="ChEBI" id="CHEBI:60344"/>
        <dbReference type="EC" id="4.98.1.1"/>
    </reaction>
</comment>
<comment type="pathway">
    <text evidence="1">Porphyrin-containing compound metabolism; protoheme biosynthesis; protoheme from protoporphyrin-IX: step 1/1.</text>
</comment>
<comment type="subcellular location">
    <subcellularLocation>
        <location evidence="1">Cytoplasm</location>
    </subcellularLocation>
</comment>
<comment type="similarity">
    <text evidence="1">Belongs to the ferrochelatase family.</text>
</comment>
<reference key="1">
    <citation type="submission" date="2007-05" db="EMBL/GenBank/DDBJ databases">
        <title>Complete sequence of chromosome of Psychrobacter sp. PRwf-1.</title>
        <authorList>
            <consortium name="US DOE Joint Genome Institute"/>
            <person name="Copeland A."/>
            <person name="Lucas S."/>
            <person name="Lapidus A."/>
            <person name="Barry K."/>
            <person name="Detter J.C."/>
            <person name="Glavina del Rio T."/>
            <person name="Hammon N."/>
            <person name="Israni S."/>
            <person name="Dalin E."/>
            <person name="Tice H."/>
            <person name="Pitluck S."/>
            <person name="Chain P."/>
            <person name="Malfatti S."/>
            <person name="Shin M."/>
            <person name="Vergez L."/>
            <person name="Schmutz J."/>
            <person name="Larimer F."/>
            <person name="Land M."/>
            <person name="Hauser L."/>
            <person name="Kyrpides N."/>
            <person name="Kim E."/>
            <person name="Tiedje J."/>
            <person name="Richardson P."/>
        </authorList>
    </citation>
    <scope>NUCLEOTIDE SEQUENCE [LARGE SCALE GENOMIC DNA]</scope>
    <source>
        <strain>PRwf-1</strain>
    </source>
</reference>
<gene>
    <name evidence="1" type="primary">hemH</name>
    <name type="ordered locus">PsycPRwf_2057</name>
</gene>
<dbReference type="EC" id="4.98.1.1" evidence="1"/>
<dbReference type="EMBL" id="CP000713">
    <property type="protein sequence ID" value="ABQ94997.1"/>
    <property type="molecule type" value="Genomic_DNA"/>
</dbReference>
<dbReference type="SMR" id="A5WH56"/>
<dbReference type="STRING" id="349106.PsycPRwf_2057"/>
<dbReference type="KEGG" id="prw:PsycPRwf_2057"/>
<dbReference type="eggNOG" id="COG0276">
    <property type="taxonomic scope" value="Bacteria"/>
</dbReference>
<dbReference type="HOGENOM" id="CLU_018884_0_0_6"/>
<dbReference type="UniPathway" id="UPA00252">
    <property type="reaction ID" value="UER00325"/>
</dbReference>
<dbReference type="GO" id="GO:0005737">
    <property type="term" value="C:cytoplasm"/>
    <property type="evidence" value="ECO:0007669"/>
    <property type="project" value="UniProtKB-SubCell"/>
</dbReference>
<dbReference type="GO" id="GO:0004325">
    <property type="term" value="F:ferrochelatase activity"/>
    <property type="evidence" value="ECO:0007669"/>
    <property type="project" value="UniProtKB-UniRule"/>
</dbReference>
<dbReference type="GO" id="GO:0046872">
    <property type="term" value="F:metal ion binding"/>
    <property type="evidence" value="ECO:0007669"/>
    <property type="project" value="UniProtKB-KW"/>
</dbReference>
<dbReference type="GO" id="GO:0006783">
    <property type="term" value="P:heme biosynthetic process"/>
    <property type="evidence" value="ECO:0007669"/>
    <property type="project" value="UniProtKB-UniRule"/>
</dbReference>
<dbReference type="CDD" id="cd00419">
    <property type="entry name" value="Ferrochelatase_C"/>
    <property type="match status" value="1"/>
</dbReference>
<dbReference type="CDD" id="cd03411">
    <property type="entry name" value="Ferrochelatase_N"/>
    <property type="match status" value="1"/>
</dbReference>
<dbReference type="FunFam" id="3.40.50.1400:FF:000002">
    <property type="entry name" value="Ferrochelatase"/>
    <property type="match status" value="1"/>
</dbReference>
<dbReference type="Gene3D" id="3.40.50.1400">
    <property type="match status" value="2"/>
</dbReference>
<dbReference type="HAMAP" id="MF_00323">
    <property type="entry name" value="Ferrochelatase"/>
    <property type="match status" value="1"/>
</dbReference>
<dbReference type="InterPro" id="IPR001015">
    <property type="entry name" value="Ferrochelatase"/>
</dbReference>
<dbReference type="InterPro" id="IPR019772">
    <property type="entry name" value="Ferrochelatase_AS"/>
</dbReference>
<dbReference type="InterPro" id="IPR033644">
    <property type="entry name" value="Ferrochelatase_C"/>
</dbReference>
<dbReference type="InterPro" id="IPR033659">
    <property type="entry name" value="Ferrochelatase_N"/>
</dbReference>
<dbReference type="NCBIfam" id="TIGR00109">
    <property type="entry name" value="hemH"/>
    <property type="match status" value="1"/>
</dbReference>
<dbReference type="PANTHER" id="PTHR11108">
    <property type="entry name" value="FERROCHELATASE"/>
    <property type="match status" value="1"/>
</dbReference>
<dbReference type="PANTHER" id="PTHR11108:SF1">
    <property type="entry name" value="FERROCHELATASE, MITOCHONDRIAL"/>
    <property type="match status" value="1"/>
</dbReference>
<dbReference type="Pfam" id="PF00762">
    <property type="entry name" value="Ferrochelatase"/>
    <property type="match status" value="1"/>
</dbReference>
<dbReference type="SUPFAM" id="SSF53800">
    <property type="entry name" value="Chelatase"/>
    <property type="match status" value="1"/>
</dbReference>
<dbReference type="PROSITE" id="PS00534">
    <property type="entry name" value="FERROCHELATASE"/>
    <property type="match status" value="1"/>
</dbReference>
<evidence type="ECO:0000255" key="1">
    <source>
        <dbReference type="HAMAP-Rule" id="MF_00323"/>
    </source>
</evidence>